<feature type="initiator methionine" description="Removed" evidence="1">
    <location>
        <position position="1"/>
    </location>
</feature>
<feature type="chain" id="PRO_0000293169" description="D-erythrose-4-phosphate dehydrogenase">
    <location>
        <begin position="2"/>
        <end position="339"/>
    </location>
</feature>
<feature type="active site" description="Nucleophile" evidence="2">
    <location>
        <position position="155"/>
    </location>
</feature>
<feature type="binding site" evidence="2">
    <location>
        <begin position="12"/>
        <end position="13"/>
    </location>
    <ligand>
        <name>NAD(+)</name>
        <dbReference type="ChEBI" id="CHEBI:57540"/>
    </ligand>
</feature>
<feature type="binding site" evidence="2">
    <location>
        <position position="81"/>
    </location>
    <ligand>
        <name>NAD(+)</name>
        <dbReference type="ChEBI" id="CHEBI:57540"/>
    </ligand>
</feature>
<feature type="binding site" evidence="2">
    <location>
        <begin position="154"/>
        <end position="156"/>
    </location>
    <ligand>
        <name>substrate</name>
    </ligand>
</feature>
<feature type="binding site" evidence="2">
    <location>
        <position position="200"/>
    </location>
    <ligand>
        <name>substrate</name>
    </ligand>
</feature>
<feature type="binding site" evidence="2">
    <location>
        <begin position="213"/>
        <end position="214"/>
    </location>
    <ligand>
        <name>substrate</name>
    </ligand>
</feature>
<feature type="binding site" evidence="2">
    <location>
        <position position="236"/>
    </location>
    <ligand>
        <name>substrate</name>
    </ligand>
</feature>
<feature type="binding site" evidence="2">
    <location>
        <position position="318"/>
    </location>
    <ligand>
        <name>NAD(+)</name>
        <dbReference type="ChEBI" id="CHEBI:57540"/>
    </ligand>
</feature>
<feature type="site" description="Activates thiol group during catalysis" evidence="2">
    <location>
        <position position="182"/>
    </location>
</feature>
<sequence>MTVRVAINGFGRIGRNVVRALYESGRRAEITVVAINELADAAGMAHLLKYDTSHGRFAWEVRQERDQLFVGDDAIRVLHERSLQSLPWRELGVDVVLDCTGVYGSREHGEAHIAAGAKKVLFSHPGSNDLDATVVYGVNQDQLRAEHRIVSNASCTTNCIIPVIKLLDDAYGIESGTVTTIHSAMHDQQVIDAYHPDLRRTRAASQSIIPVDTKLAAGITRFFPQFNDRFEAIAVRVPTINVTAIDLSVTVKKPVKANEVNLLLQKAAQGAFHGIVDYTELPLVSVDFNHDPHSAIVDGTQTRVSGAHLIKTLVWCDNEWGFANRMLDTTLAMATVAFR</sequence>
<proteinExistence type="inferred from homology"/>
<dbReference type="EC" id="1.2.1.72" evidence="2"/>
<dbReference type="EMBL" id="CP000036">
    <property type="protein sequence ID" value="ABB67572.1"/>
    <property type="molecule type" value="Genomic_DNA"/>
</dbReference>
<dbReference type="RefSeq" id="WP_000218480.1">
    <property type="nucleotide sequence ID" value="NC_007613.1"/>
</dbReference>
<dbReference type="SMR" id="Q31WI6"/>
<dbReference type="GeneID" id="93779071"/>
<dbReference type="KEGG" id="sbo:SBO_3066"/>
<dbReference type="HOGENOM" id="CLU_030140_0_2_6"/>
<dbReference type="UniPathway" id="UPA00244">
    <property type="reaction ID" value="UER00309"/>
</dbReference>
<dbReference type="Proteomes" id="UP000007067">
    <property type="component" value="Chromosome"/>
</dbReference>
<dbReference type="GO" id="GO:0005737">
    <property type="term" value="C:cytoplasm"/>
    <property type="evidence" value="ECO:0007669"/>
    <property type="project" value="UniProtKB-SubCell"/>
</dbReference>
<dbReference type="GO" id="GO:0048001">
    <property type="term" value="F:erythrose-4-phosphate dehydrogenase activity"/>
    <property type="evidence" value="ECO:0007669"/>
    <property type="project" value="UniProtKB-UniRule"/>
</dbReference>
<dbReference type="GO" id="GO:0051287">
    <property type="term" value="F:NAD binding"/>
    <property type="evidence" value="ECO:0007669"/>
    <property type="project" value="InterPro"/>
</dbReference>
<dbReference type="GO" id="GO:0042823">
    <property type="term" value="P:pyridoxal phosphate biosynthetic process"/>
    <property type="evidence" value="ECO:0007669"/>
    <property type="project" value="UniProtKB-UniRule"/>
</dbReference>
<dbReference type="GO" id="GO:0008615">
    <property type="term" value="P:pyridoxine biosynthetic process"/>
    <property type="evidence" value="ECO:0007669"/>
    <property type="project" value="UniProtKB-UniRule"/>
</dbReference>
<dbReference type="CDD" id="cd23937">
    <property type="entry name" value="GAPDH_C_E4PDH"/>
    <property type="match status" value="1"/>
</dbReference>
<dbReference type="CDD" id="cd17892">
    <property type="entry name" value="GAPDH_N_E4PDH"/>
    <property type="match status" value="1"/>
</dbReference>
<dbReference type="FunFam" id="3.30.360.10:FF:000007">
    <property type="entry name" value="D-erythrose-4-phosphate dehydrogenase"/>
    <property type="match status" value="1"/>
</dbReference>
<dbReference type="FunFam" id="3.40.50.720:FF:000001">
    <property type="entry name" value="Glyceraldehyde-3-phosphate dehydrogenase"/>
    <property type="match status" value="1"/>
</dbReference>
<dbReference type="Gene3D" id="3.30.360.10">
    <property type="entry name" value="Dihydrodipicolinate Reductase, domain 2"/>
    <property type="match status" value="1"/>
</dbReference>
<dbReference type="Gene3D" id="3.40.50.720">
    <property type="entry name" value="NAD(P)-binding Rossmann-like Domain"/>
    <property type="match status" value="1"/>
</dbReference>
<dbReference type="HAMAP" id="MF_01640">
    <property type="entry name" value="E4P_dehydrog"/>
    <property type="match status" value="1"/>
</dbReference>
<dbReference type="InterPro" id="IPR006422">
    <property type="entry name" value="E4P_DH_bac"/>
</dbReference>
<dbReference type="InterPro" id="IPR020831">
    <property type="entry name" value="GlycerAld/Erythrose_P_DH"/>
</dbReference>
<dbReference type="InterPro" id="IPR020830">
    <property type="entry name" value="GlycerAld_3-P_DH_AS"/>
</dbReference>
<dbReference type="InterPro" id="IPR020829">
    <property type="entry name" value="GlycerAld_3-P_DH_cat"/>
</dbReference>
<dbReference type="InterPro" id="IPR020828">
    <property type="entry name" value="GlycerAld_3-P_DH_NAD(P)-bd"/>
</dbReference>
<dbReference type="InterPro" id="IPR036291">
    <property type="entry name" value="NAD(P)-bd_dom_sf"/>
</dbReference>
<dbReference type="NCBIfam" id="TIGR01532">
    <property type="entry name" value="E4PD_g-proteo"/>
    <property type="match status" value="1"/>
</dbReference>
<dbReference type="NCBIfam" id="NF010058">
    <property type="entry name" value="PRK13535.1"/>
    <property type="match status" value="1"/>
</dbReference>
<dbReference type="PANTHER" id="PTHR43148">
    <property type="entry name" value="GLYCERALDEHYDE-3-PHOSPHATE DEHYDROGENASE 2"/>
    <property type="match status" value="1"/>
</dbReference>
<dbReference type="Pfam" id="PF02800">
    <property type="entry name" value="Gp_dh_C"/>
    <property type="match status" value="1"/>
</dbReference>
<dbReference type="Pfam" id="PF00044">
    <property type="entry name" value="Gp_dh_N"/>
    <property type="match status" value="1"/>
</dbReference>
<dbReference type="PIRSF" id="PIRSF000149">
    <property type="entry name" value="GAP_DH"/>
    <property type="match status" value="1"/>
</dbReference>
<dbReference type="PRINTS" id="PR00078">
    <property type="entry name" value="G3PDHDRGNASE"/>
</dbReference>
<dbReference type="SMART" id="SM00846">
    <property type="entry name" value="Gp_dh_N"/>
    <property type="match status" value="1"/>
</dbReference>
<dbReference type="SUPFAM" id="SSF55347">
    <property type="entry name" value="Glyceraldehyde-3-phosphate dehydrogenase-like, C-terminal domain"/>
    <property type="match status" value="1"/>
</dbReference>
<dbReference type="SUPFAM" id="SSF51735">
    <property type="entry name" value="NAD(P)-binding Rossmann-fold domains"/>
    <property type="match status" value="1"/>
</dbReference>
<dbReference type="PROSITE" id="PS00071">
    <property type="entry name" value="GAPDH"/>
    <property type="match status" value="1"/>
</dbReference>
<gene>
    <name evidence="2" type="primary">epd</name>
    <name type="ordered locus">SBO_3066</name>
</gene>
<reference key="1">
    <citation type="journal article" date="2005" name="Nucleic Acids Res.">
        <title>Genome dynamics and diversity of Shigella species, the etiologic agents of bacillary dysentery.</title>
        <authorList>
            <person name="Yang F."/>
            <person name="Yang J."/>
            <person name="Zhang X."/>
            <person name="Chen L."/>
            <person name="Jiang Y."/>
            <person name="Yan Y."/>
            <person name="Tang X."/>
            <person name="Wang J."/>
            <person name="Xiong Z."/>
            <person name="Dong J."/>
            <person name="Xue Y."/>
            <person name="Zhu Y."/>
            <person name="Xu X."/>
            <person name="Sun L."/>
            <person name="Chen S."/>
            <person name="Nie H."/>
            <person name="Peng J."/>
            <person name="Xu J."/>
            <person name="Wang Y."/>
            <person name="Yuan Z."/>
            <person name="Wen Y."/>
            <person name="Yao Z."/>
            <person name="Shen Y."/>
            <person name="Qiang B."/>
            <person name="Hou Y."/>
            <person name="Yu J."/>
            <person name="Jin Q."/>
        </authorList>
    </citation>
    <scope>NUCLEOTIDE SEQUENCE [LARGE SCALE GENOMIC DNA]</scope>
    <source>
        <strain>Sb227</strain>
    </source>
</reference>
<evidence type="ECO:0000250" key="1"/>
<evidence type="ECO:0000255" key="2">
    <source>
        <dbReference type="HAMAP-Rule" id="MF_01640"/>
    </source>
</evidence>
<protein>
    <recommendedName>
        <fullName evidence="2">D-erythrose-4-phosphate dehydrogenase</fullName>
        <shortName evidence="2">E4PDH</shortName>
        <ecNumber evidence="2">1.2.1.72</ecNumber>
    </recommendedName>
</protein>
<keyword id="KW-0963">Cytoplasm</keyword>
<keyword id="KW-0520">NAD</keyword>
<keyword id="KW-0560">Oxidoreductase</keyword>
<keyword id="KW-0664">Pyridoxine biosynthesis</keyword>
<comment type="function">
    <text evidence="2">Catalyzes the NAD-dependent conversion of D-erythrose 4-phosphate to 4-phosphoerythronate.</text>
</comment>
<comment type="catalytic activity">
    <reaction evidence="2">
        <text>D-erythrose 4-phosphate + NAD(+) + H2O = 4-phospho-D-erythronate + NADH + 2 H(+)</text>
        <dbReference type="Rhea" id="RHEA:12056"/>
        <dbReference type="ChEBI" id="CHEBI:15377"/>
        <dbReference type="ChEBI" id="CHEBI:15378"/>
        <dbReference type="ChEBI" id="CHEBI:16897"/>
        <dbReference type="ChEBI" id="CHEBI:57540"/>
        <dbReference type="ChEBI" id="CHEBI:57945"/>
        <dbReference type="ChEBI" id="CHEBI:58766"/>
        <dbReference type="EC" id="1.2.1.72"/>
    </reaction>
</comment>
<comment type="pathway">
    <text evidence="2">Cofactor biosynthesis; pyridoxine 5'-phosphate biosynthesis; pyridoxine 5'-phosphate from D-erythrose 4-phosphate: step 1/5.</text>
</comment>
<comment type="subunit">
    <text evidence="2">Homotetramer.</text>
</comment>
<comment type="subcellular location">
    <subcellularLocation>
        <location evidence="2">Cytoplasm</location>
    </subcellularLocation>
</comment>
<comment type="similarity">
    <text evidence="2">Belongs to the glyceraldehyde-3-phosphate dehydrogenase family. Epd subfamily.</text>
</comment>
<accession>Q31WI6</accession>
<organism>
    <name type="scientific">Shigella boydii serotype 4 (strain Sb227)</name>
    <dbReference type="NCBI Taxonomy" id="300268"/>
    <lineage>
        <taxon>Bacteria</taxon>
        <taxon>Pseudomonadati</taxon>
        <taxon>Pseudomonadota</taxon>
        <taxon>Gammaproteobacteria</taxon>
        <taxon>Enterobacterales</taxon>
        <taxon>Enterobacteriaceae</taxon>
        <taxon>Shigella</taxon>
    </lineage>
</organism>
<name>E4PD_SHIBS</name>